<reference key="1">
    <citation type="submission" date="2006-08" db="EMBL/GenBank/DDBJ databases">
        <title>Complete sequence of chromosome 1 of Shewanella sp. MR-7.</title>
        <authorList>
            <person name="Copeland A."/>
            <person name="Lucas S."/>
            <person name="Lapidus A."/>
            <person name="Barry K."/>
            <person name="Detter J.C."/>
            <person name="Glavina del Rio T."/>
            <person name="Hammon N."/>
            <person name="Israni S."/>
            <person name="Dalin E."/>
            <person name="Tice H."/>
            <person name="Pitluck S."/>
            <person name="Kiss H."/>
            <person name="Brettin T."/>
            <person name="Bruce D."/>
            <person name="Han C."/>
            <person name="Tapia R."/>
            <person name="Gilna P."/>
            <person name="Schmutz J."/>
            <person name="Larimer F."/>
            <person name="Land M."/>
            <person name="Hauser L."/>
            <person name="Kyrpides N."/>
            <person name="Mikhailova N."/>
            <person name="Nealson K."/>
            <person name="Konstantinidis K."/>
            <person name="Klappenbach J."/>
            <person name="Tiedje J."/>
            <person name="Richardson P."/>
        </authorList>
    </citation>
    <scope>NUCLEOTIDE SEQUENCE [LARGE SCALE GENOMIC DNA]</scope>
    <source>
        <strain>MR-7</strain>
    </source>
</reference>
<protein>
    <recommendedName>
        <fullName evidence="1">Holo-[acyl-carrier-protein] synthase</fullName>
        <shortName evidence="1">Holo-ACP synthase</shortName>
        <ecNumber evidence="1">2.7.8.7</ecNumber>
    </recommendedName>
    <alternativeName>
        <fullName evidence="1">4'-phosphopantetheinyl transferase AcpS</fullName>
    </alternativeName>
</protein>
<comment type="function">
    <text evidence="1">Transfers the 4'-phosphopantetheine moiety from coenzyme A to a Ser of acyl-carrier-protein.</text>
</comment>
<comment type="catalytic activity">
    <reaction evidence="1">
        <text>apo-[ACP] + CoA = holo-[ACP] + adenosine 3',5'-bisphosphate + H(+)</text>
        <dbReference type="Rhea" id="RHEA:12068"/>
        <dbReference type="Rhea" id="RHEA-COMP:9685"/>
        <dbReference type="Rhea" id="RHEA-COMP:9690"/>
        <dbReference type="ChEBI" id="CHEBI:15378"/>
        <dbReference type="ChEBI" id="CHEBI:29999"/>
        <dbReference type="ChEBI" id="CHEBI:57287"/>
        <dbReference type="ChEBI" id="CHEBI:58343"/>
        <dbReference type="ChEBI" id="CHEBI:64479"/>
        <dbReference type="EC" id="2.7.8.7"/>
    </reaction>
</comment>
<comment type="cofactor">
    <cofactor evidence="1">
        <name>Mg(2+)</name>
        <dbReference type="ChEBI" id="CHEBI:18420"/>
    </cofactor>
</comment>
<comment type="subcellular location">
    <subcellularLocation>
        <location evidence="1">Cytoplasm</location>
    </subcellularLocation>
</comment>
<comment type="similarity">
    <text evidence="1">Belongs to the P-Pant transferase superfamily. AcpS family.</text>
</comment>
<name>ACPS_SHESR</name>
<sequence>MAIVGLGTDIVEIERITAHVARSGDKLAKRVLTEAEFEIYQQHSQPSRYLAKRFAAKEAAAKALGTGIGRGVSFQHIHIGNTPDGAPTIDFTQGAQQRLALLNGVVGHISIADEKSYAIATVILESR</sequence>
<evidence type="ECO:0000255" key="1">
    <source>
        <dbReference type="HAMAP-Rule" id="MF_00101"/>
    </source>
</evidence>
<gene>
    <name evidence="1" type="primary">acpS</name>
    <name type="ordered locus">Shewmr7_2926</name>
</gene>
<dbReference type="EC" id="2.7.8.7" evidence="1"/>
<dbReference type="EMBL" id="CP000444">
    <property type="protein sequence ID" value="ABI43910.1"/>
    <property type="molecule type" value="Genomic_DNA"/>
</dbReference>
<dbReference type="SMR" id="Q0HSJ5"/>
<dbReference type="KEGG" id="shm:Shewmr7_2926"/>
<dbReference type="HOGENOM" id="CLU_089696_3_1_6"/>
<dbReference type="GO" id="GO:0005737">
    <property type="term" value="C:cytoplasm"/>
    <property type="evidence" value="ECO:0007669"/>
    <property type="project" value="UniProtKB-SubCell"/>
</dbReference>
<dbReference type="GO" id="GO:0008897">
    <property type="term" value="F:holo-[acyl-carrier-protein] synthase activity"/>
    <property type="evidence" value="ECO:0007669"/>
    <property type="project" value="UniProtKB-UniRule"/>
</dbReference>
<dbReference type="GO" id="GO:0000287">
    <property type="term" value="F:magnesium ion binding"/>
    <property type="evidence" value="ECO:0007669"/>
    <property type="project" value="UniProtKB-UniRule"/>
</dbReference>
<dbReference type="GO" id="GO:0006633">
    <property type="term" value="P:fatty acid biosynthetic process"/>
    <property type="evidence" value="ECO:0007669"/>
    <property type="project" value="UniProtKB-UniRule"/>
</dbReference>
<dbReference type="FunFam" id="3.90.470.20:FF:000001">
    <property type="entry name" value="Holo-[acyl-carrier-protein] synthase"/>
    <property type="match status" value="1"/>
</dbReference>
<dbReference type="Gene3D" id="3.90.470.20">
    <property type="entry name" value="4'-phosphopantetheinyl transferase domain"/>
    <property type="match status" value="1"/>
</dbReference>
<dbReference type="HAMAP" id="MF_00101">
    <property type="entry name" value="AcpS"/>
    <property type="match status" value="1"/>
</dbReference>
<dbReference type="InterPro" id="IPR008278">
    <property type="entry name" value="4-PPantetheinyl_Trfase_dom"/>
</dbReference>
<dbReference type="InterPro" id="IPR037143">
    <property type="entry name" value="4-PPantetheinyl_Trfase_dom_sf"/>
</dbReference>
<dbReference type="InterPro" id="IPR002582">
    <property type="entry name" value="ACPS"/>
</dbReference>
<dbReference type="InterPro" id="IPR004568">
    <property type="entry name" value="Ppantetheine-prot_Trfase_dom"/>
</dbReference>
<dbReference type="NCBIfam" id="TIGR00516">
    <property type="entry name" value="acpS"/>
    <property type="match status" value="1"/>
</dbReference>
<dbReference type="NCBIfam" id="TIGR00556">
    <property type="entry name" value="pantethn_trn"/>
    <property type="match status" value="1"/>
</dbReference>
<dbReference type="Pfam" id="PF01648">
    <property type="entry name" value="ACPS"/>
    <property type="match status" value="1"/>
</dbReference>
<dbReference type="SUPFAM" id="SSF56214">
    <property type="entry name" value="4'-phosphopantetheinyl transferase"/>
    <property type="match status" value="1"/>
</dbReference>
<accession>Q0HSJ5</accession>
<organism>
    <name type="scientific">Shewanella sp. (strain MR-7)</name>
    <dbReference type="NCBI Taxonomy" id="60481"/>
    <lineage>
        <taxon>Bacteria</taxon>
        <taxon>Pseudomonadati</taxon>
        <taxon>Pseudomonadota</taxon>
        <taxon>Gammaproteobacteria</taxon>
        <taxon>Alteromonadales</taxon>
        <taxon>Shewanellaceae</taxon>
        <taxon>Shewanella</taxon>
    </lineage>
</organism>
<keyword id="KW-0963">Cytoplasm</keyword>
<keyword id="KW-0275">Fatty acid biosynthesis</keyword>
<keyword id="KW-0276">Fatty acid metabolism</keyword>
<keyword id="KW-0444">Lipid biosynthesis</keyword>
<keyword id="KW-0443">Lipid metabolism</keyword>
<keyword id="KW-0460">Magnesium</keyword>
<keyword id="KW-0479">Metal-binding</keyword>
<keyword id="KW-0808">Transferase</keyword>
<feature type="chain" id="PRO_1000008498" description="Holo-[acyl-carrier-protein] synthase">
    <location>
        <begin position="1"/>
        <end position="127"/>
    </location>
</feature>
<feature type="binding site" evidence="1">
    <location>
        <position position="9"/>
    </location>
    <ligand>
        <name>Mg(2+)</name>
        <dbReference type="ChEBI" id="CHEBI:18420"/>
    </ligand>
</feature>
<feature type="binding site" evidence="1">
    <location>
        <position position="58"/>
    </location>
    <ligand>
        <name>Mg(2+)</name>
        <dbReference type="ChEBI" id="CHEBI:18420"/>
    </ligand>
</feature>
<proteinExistence type="inferred from homology"/>